<organism>
    <name type="scientific">Clostridium perfringens (strain 13 / Type A)</name>
    <dbReference type="NCBI Taxonomy" id="195102"/>
    <lineage>
        <taxon>Bacteria</taxon>
        <taxon>Bacillati</taxon>
        <taxon>Bacillota</taxon>
        <taxon>Clostridia</taxon>
        <taxon>Eubacteriales</taxon>
        <taxon>Clostridiaceae</taxon>
        <taxon>Clostridium</taxon>
    </lineage>
</organism>
<proteinExistence type="inferred from homology"/>
<protein>
    <recommendedName>
        <fullName evidence="1">dTTP/UTP pyrophosphatase</fullName>
        <shortName evidence="1">dTTPase/UTPase</shortName>
        <ecNumber evidence="1">3.6.1.9</ecNumber>
    </recommendedName>
    <alternativeName>
        <fullName evidence="1">Nucleoside triphosphate pyrophosphatase</fullName>
    </alternativeName>
    <alternativeName>
        <fullName evidence="1">Nucleotide pyrophosphatase</fullName>
        <shortName evidence="1">Nucleotide PPase</shortName>
    </alternativeName>
</protein>
<reference key="1">
    <citation type="journal article" date="2002" name="Proc. Natl. Acad. Sci. U.S.A.">
        <title>Complete genome sequence of Clostridium perfringens, an anaerobic flesh-eater.</title>
        <authorList>
            <person name="Shimizu T."/>
            <person name="Ohtani K."/>
            <person name="Hirakawa H."/>
            <person name="Ohshima K."/>
            <person name="Yamashita A."/>
            <person name="Shiba T."/>
            <person name="Ogasawara N."/>
            <person name="Hattori M."/>
            <person name="Kuhara S."/>
            <person name="Hayashi H."/>
        </authorList>
    </citation>
    <scope>NUCLEOTIDE SEQUENCE [LARGE SCALE GENOMIC DNA]</scope>
    <source>
        <strain>13 / Type A</strain>
    </source>
</reference>
<dbReference type="EC" id="3.6.1.9" evidence="1"/>
<dbReference type="EMBL" id="BA000016">
    <property type="protein sequence ID" value="BAB81851.1"/>
    <property type="molecule type" value="Genomic_DNA"/>
</dbReference>
<dbReference type="RefSeq" id="WP_011010787.1">
    <property type="nucleotide sequence ID" value="NC_003366.1"/>
</dbReference>
<dbReference type="SMR" id="Q8XIH4"/>
<dbReference type="STRING" id="195102.gene:10491415"/>
<dbReference type="KEGG" id="cpe:CPE2145"/>
<dbReference type="HOGENOM" id="CLU_040416_0_2_9"/>
<dbReference type="Proteomes" id="UP000000818">
    <property type="component" value="Chromosome"/>
</dbReference>
<dbReference type="GO" id="GO:0005737">
    <property type="term" value="C:cytoplasm"/>
    <property type="evidence" value="ECO:0007669"/>
    <property type="project" value="UniProtKB-SubCell"/>
</dbReference>
<dbReference type="GO" id="GO:0036218">
    <property type="term" value="F:dTTP diphosphatase activity"/>
    <property type="evidence" value="ECO:0007669"/>
    <property type="project" value="RHEA"/>
</dbReference>
<dbReference type="GO" id="GO:0036221">
    <property type="term" value="F:UTP diphosphatase activity"/>
    <property type="evidence" value="ECO:0007669"/>
    <property type="project" value="RHEA"/>
</dbReference>
<dbReference type="GO" id="GO:0009117">
    <property type="term" value="P:nucleotide metabolic process"/>
    <property type="evidence" value="ECO:0007669"/>
    <property type="project" value="UniProtKB-KW"/>
</dbReference>
<dbReference type="CDD" id="cd00555">
    <property type="entry name" value="Maf"/>
    <property type="match status" value="1"/>
</dbReference>
<dbReference type="FunFam" id="3.90.950.10:FF:000005">
    <property type="entry name" value="7-methyl-GTP pyrophosphatase"/>
    <property type="match status" value="1"/>
</dbReference>
<dbReference type="Gene3D" id="3.90.950.10">
    <property type="match status" value="1"/>
</dbReference>
<dbReference type="HAMAP" id="MF_00528">
    <property type="entry name" value="Maf"/>
    <property type="match status" value="1"/>
</dbReference>
<dbReference type="InterPro" id="IPR029001">
    <property type="entry name" value="ITPase-like_fam"/>
</dbReference>
<dbReference type="InterPro" id="IPR003697">
    <property type="entry name" value="Maf-like"/>
</dbReference>
<dbReference type="NCBIfam" id="TIGR00172">
    <property type="entry name" value="maf"/>
    <property type="match status" value="1"/>
</dbReference>
<dbReference type="NCBIfam" id="NF000867">
    <property type="entry name" value="PRK00078.1"/>
    <property type="match status" value="1"/>
</dbReference>
<dbReference type="PANTHER" id="PTHR43213">
    <property type="entry name" value="BIFUNCTIONAL DTTP/UTP PYROPHOSPHATASE/METHYLTRANSFERASE PROTEIN-RELATED"/>
    <property type="match status" value="1"/>
</dbReference>
<dbReference type="PANTHER" id="PTHR43213:SF5">
    <property type="entry name" value="BIFUNCTIONAL DTTP_UTP PYROPHOSPHATASE_METHYLTRANSFERASE PROTEIN-RELATED"/>
    <property type="match status" value="1"/>
</dbReference>
<dbReference type="Pfam" id="PF02545">
    <property type="entry name" value="Maf"/>
    <property type="match status" value="1"/>
</dbReference>
<dbReference type="PIRSF" id="PIRSF006305">
    <property type="entry name" value="Maf"/>
    <property type="match status" value="1"/>
</dbReference>
<dbReference type="SUPFAM" id="SSF52972">
    <property type="entry name" value="ITPase-like"/>
    <property type="match status" value="1"/>
</dbReference>
<name>NTPPA_CLOPE</name>
<keyword id="KW-0963">Cytoplasm</keyword>
<keyword id="KW-0378">Hydrolase</keyword>
<keyword id="KW-0546">Nucleotide metabolism</keyword>
<keyword id="KW-1185">Reference proteome</keyword>
<sequence>MKVILASKSPRRVEILEKIVKEFEVVQSNFDENTIDFKGDIEKYVKDLSRNKAIEVSKRLNEPSIVISADTVVFQDGKVLEKPKNEEDAFSMLSSLSGNTHKVYSGICLINTYDDTVVTDCDCTEVRFSELNPRQIRNYINSGEPMDKAGAYGIQGLGGAFVEGIKGCYYNVMGLPLNKLYKALENYDITIL</sequence>
<feature type="chain" id="PRO_0000123015" description="dTTP/UTP pyrophosphatase">
    <location>
        <begin position="1"/>
        <end position="192"/>
    </location>
</feature>
<feature type="active site" description="Proton acceptor" evidence="1">
    <location>
        <position position="70"/>
    </location>
</feature>
<feature type="site" description="Important for substrate specificity" evidence="1">
    <location>
        <position position="11"/>
    </location>
</feature>
<feature type="site" description="Important for substrate specificity" evidence="1">
    <location>
        <position position="71"/>
    </location>
</feature>
<feature type="site" description="Important for substrate specificity" evidence="1">
    <location>
        <position position="155"/>
    </location>
</feature>
<comment type="function">
    <text evidence="1">Nucleoside triphosphate pyrophosphatase that hydrolyzes dTTP and UTP. May have a dual role in cell division arrest and in preventing the incorporation of modified nucleotides into cellular nucleic acids.</text>
</comment>
<comment type="catalytic activity">
    <reaction evidence="1">
        <text>dTTP + H2O = dTMP + diphosphate + H(+)</text>
        <dbReference type="Rhea" id="RHEA:28534"/>
        <dbReference type="ChEBI" id="CHEBI:15377"/>
        <dbReference type="ChEBI" id="CHEBI:15378"/>
        <dbReference type="ChEBI" id="CHEBI:33019"/>
        <dbReference type="ChEBI" id="CHEBI:37568"/>
        <dbReference type="ChEBI" id="CHEBI:63528"/>
        <dbReference type="EC" id="3.6.1.9"/>
    </reaction>
</comment>
<comment type="catalytic activity">
    <reaction evidence="1">
        <text>UTP + H2O = UMP + diphosphate + H(+)</text>
        <dbReference type="Rhea" id="RHEA:29395"/>
        <dbReference type="ChEBI" id="CHEBI:15377"/>
        <dbReference type="ChEBI" id="CHEBI:15378"/>
        <dbReference type="ChEBI" id="CHEBI:33019"/>
        <dbReference type="ChEBI" id="CHEBI:46398"/>
        <dbReference type="ChEBI" id="CHEBI:57865"/>
        <dbReference type="EC" id="3.6.1.9"/>
    </reaction>
</comment>
<comment type="cofactor">
    <cofactor evidence="1">
        <name>a divalent metal cation</name>
        <dbReference type="ChEBI" id="CHEBI:60240"/>
    </cofactor>
</comment>
<comment type="subcellular location">
    <subcellularLocation>
        <location evidence="1">Cytoplasm</location>
    </subcellularLocation>
</comment>
<comment type="similarity">
    <text evidence="1">Belongs to the Maf family. YhdE subfamily.</text>
</comment>
<evidence type="ECO:0000255" key="1">
    <source>
        <dbReference type="HAMAP-Rule" id="MF_00528"/>
    </source>
</evidence>
<gene>
    <name type="primary">maf</name>
    <name type="ordered locus">CPE2145</name>
</gene>
<accession>Q8XIH4</accession>